<proteinExistence type="inferred from homology"/>
<reference key="1">
    <citation type="journal article" date="2006" name="PLoS Genet.">
        <title>Genome sequence of Rickettsia bellii illuminates the role of amoebae in gene exchanges between intracellular pathogens.</title>
        <authorList>
            <person name="Ogata H."/>
            <person name="La Scola B."/>
            <person name="Audic S."/>
            <person name="Renesto P."/>
            <person name="Blanc G."/>
            <person name="Robert C."/>
            <person name="Fournier P.-E."/>
            <person name="Claverie J.-M."/>
            <person name="Raoult D."/>
        </authorList>
    </citation>
    <scope>NUCLEOTIDE SEQUENCE [LARGE SCALE GENOMIC DNA]</scope>
    <source>
        <strain>RML369-C</strain>
    </source>
</reference>
<evidence type="ECO:0000255" key="1">
    <source>
        <dbReference type="HAMAP-Rule" id="MF_01217"/>
    </source>
</evidence>
<evidence type="ECO:0000255" key="2">
    <source>
        <dbReference type="PROSITE-ProRule" id="PRU00258"/>
    </source>
</evidence>
<name>ACP_RICBR</name>
<accession>Q1RKB8</accession>
<dbReference type="EMBL" id="CP000087">
    <property type="protein sequence ID" value="ABE04196.1"/>
    <property type="molecule type" value="Genomic_DNA"/>
</dbReference>
<dbReference type="RefSeq" id="WP_011476811.1">
    <property type="nucleotide sequence ID" value="NC_007940.1"/>
</dbReference>
<dbReference type="SMR" id="Q1RKB8"/>
<dbReference type="KEGG" id="rbe:RBE_0115"/>
<dbReference type="eggNOG" id="COG0236">
    <property type="taxonomic scope" value="Bacteria"/>
</dbReference>
<dbReference type="HOGENOM" id="CLU_108696_5_1_5"/>
<dbReference type="OrthoDB" id="9804551at2"/>
<dbReference type="UniPathway" id="UPA00094"/>
<dbReference type="Proteomes" id="UP000001951">
    <property type="component" value="Chromosome"/>
</dbReference>
<dbReference type="GO" id="GO:0005737">
    <property type="term" value="C:cytoplasm"/>
    <property type="evidence" value="ECO:0007669"/>
    <property type="project" value="UniProtKB-SubCell"/>
</dbReference>
<dbReference type="GO" id="GO:0000035">
    <property type="term" value="F:acyl binding"/>
    <property type="evidence" value="ECO:0007669"/>
    <property type="project" value="TreeGrafter"/>
</dbReference>
<dbReference type="GO" id="GO:0000036">
    <property type="term" value="F:acyl carrier activity"/>
    <property type="evidence" value="ECO:0007669"/>
    <property type="project" value="UniProtKB-UniRule"/>
</dbReference>
<dbReference type="Gene3D" id="1.10.1200.10">
    <property type="entry name" value="ACP-like"/>
    <property type="match status" value="1"/>
</dbReference>
<dbReference type="HAMAP" id="MF_01217">
    <property type="entry name" value="Acyl_carrier"/>
    <property type="match status" value="1"/>
</dbReference>
<dbReference type="InterPro" id="IPR003231">
    <property type="entry name" value="ACP"/>
</dbReference>
<dbReference type="InterPro" id="IPR036736">
    <property type="entry name" value="ACP-like_sf"/>
</dbReference>
<dbReference type="InterPro" id="IPR009081">
    <property type="entry name" value="PP-bd_ACP"/>
</dbReference>
<dbReference type="NCBIfam" id="TIGR00517">
    <property type="entry name" value="acyl_carrier"/>
    <property type="match status" value="1"/>
</dbReference>
<dbReference type="NCBIfam" id="NF002148">
    <property type="entry name" value="PRK00982.1-2"/>
    <property type="match status" value="1"/>
</dbReference>
<dbReference type="NCBIfam" id="NF002150">
    <property type="entry name" value="PRK00982.1-4"/>
    <property type="match status" value="1"/>
</dbReference>
<dbReference type="PANTHER" id="PTHR20863">
    <property type="entry name" value="ACYL CARRIER PROTEIN"/>
    <property type="match status" value="1"/>
</dbReference>
<dbReference type="PANTHER" id="PTHR20863:SF76">
    <property type="entry name" value="CARRIER DOMAIN-CONTAINING PROTEIN"/>
    <property type="match status" value="1"/>
</dbReference>
<dbReference type="Pfam" id="PF00550">
    <property type="entry name" value="PP-binding"/>
    <property type="match status" value="1"/>
</dbReference>
<dbReference type="SUPFAM" id="SSF47336">
    <property type="entry name" value="ACP-like"/>
    <property type="match status" value="1"/>
</dbReference>
<dbReference type="PROSITE" id="PS50075">
    <property type="entry name" value="CARRIER"/>
    <property type="match status" value="1"/>
</dbReference>
<gene>
    <name evidence="1" type="primary">acpP</name>
    <name type="ordered locus">RBE_0115</name>
</gene>
<keyword id="KW-0963">Cytoplasm</keyword>
<keyword id="KW-0275">Fatty acid biosynthesis</keyword>
<keyword id="KW-0276">Fatty acid metabolism</keyword>
<keyword id="KW-0444">Lipid biosynthesis</keyword>
<keyword id="KW-0443">Lipid metabolism</keyword>
<keyword id="KW-0596">Phosphopantetheine</keyword>
<keyword id="KW-0597">Phosphoprotein</keyword>
<protein>
    <recommendedName>
        <fullName evidence="1">Acyl carrier protein</fullName>
        <shortName evidence="1">ACP</shortName>
    </recommendedName>
</protein>
<feature type="chain" id="PRO_0000272410" description="Acyl carrier protein">
    <location>
        <begin position="1"/>
        <end position="86"/>
    </location>
</feature>
<feature type="domain" description="Carrier" evidence="2">
    <location>
        <begin position="7"/>
        <end position="85"/>
    </location>
</feature>
<feature type="modified residue" description="O-(pantetheine 4'-phosphoryl)serine" evidence="2">
    <location>
        <position position="45"/>
    </location>
</feature>
<organism>
    <name type="scientific">Rickettsia bellii (strain RML369-C)</name>
    <dbReference type="NCBI Taxonomy" id="336407"/>
    <lineage>
        <taxon>Bacteria</taxon>
        <taxon>Pseudomonadati</taxon>
        <taxon>Pseudomonadota</taxon>
        <taxon>Alphaproteobacteria</taxon>
        <taxon>Rickettsiales</taxon>
        <taxon>Rickettsiaceae</taxon>
        <taxon>Rickettsieae</taxon>
        <taxon>Rickettsia</taxon>
        <taxon>belli group</taxon>
    </lineage>
</organism>
<sequence>MEFKIMSKVDNIEQKVIKVIADNQGKKIEEISVDSRFAEDLGVDSLSTVEIMMEIEKEFGVDVPDEEATKIKKVADVVNYIKEHKS</sequence>
<comment type="function">
    <text evidence="1">Carrier of the growing fatty acid chain in fatty acid biosynthesis.</text>
</comment>
<comment type="pathway">
    <text evidence="1">Lipid metabolism; fatty acid biosynthesis.</text>
</comment>
<comment type="subcellular location">
    <subcellularLocation>
        <location evidence="1">Cytoplasm</location>
    </subcellularLocation>
</comment>
<comment type="PTM">
    <text evidence="1">4'-phosphopantetheine is transferred from CoA to a specific serine of apo-ACP by AcpS. This modification is essential for activity because fatty acids are bound in thioester linkage to the sulfhydryl of the prosthetic group.</text>
</comment>
<comment type="similarity">
    <text evidence="1">Belongs to the acyl carrier protein (ACP) family.</text>
</comment>